<keyword id="KW-0963">Cytoplasm</keyword>
<keyword id="KW-0460">Magnesium</keyword>
<keyword id="KW-0479">Metal-binding</keyword>
<keyword id="KW-0566">Pantothenate biosynthesis</keyword>
<keyword id="KW-0808">Transferase</keyword>
<comment type="function">
    <text evidence="1">Catalyzes the reversible reaction in which hydroxymethyl group from 5,10-methylenetetrahydrofolate is transferred onto alpha-ketoisovalerate to form ketopantoate.</text>
</comment>
<comment type="catalytic activity">
    <reaction evidence="1">
        <text>3-methyl-2-oxobutanoate + (6R)-5,10-methylene-5,6,7,8-tetrahydrofolate + H2O = 2-dehydropantoate + (6S)-5,6,7,8-tetrahydrofolate</text>
        <dbReference type="Rhea" id="RHEA:11824"/>
        <dbReference type="ChEBI" id="CHEBI:11561"/>
        <dbReference type="ChEBI" id="CHEBI:11851"/>
        <dbReference type="ChEBI" id="CHEBI:15377"/>
        <dbReference type="ChEBI" id="CHEBI:15636"/>
        <dbReference type="ChEBI" id="CHEBI:57453"/>
        <dbReference type="EC" id="2.1.2.11"/>
    </reaction>
</comment>
<comment type="cofactor">
    <cofactor evidence="1">
        <name>Mg(2+)</name>
        <dbReference type="ChEBI" id="CHEBI:18420"/>
    </cofactor>
    <text evidence="1">Binds 1 Mg(2+) ion per subunit.</text>
</comment>
<comment type="pathway">
    <text evidence="1">Cofactor biosynthesis; (R)-pantothenate biosynthesis; (R)-pantoate from 3-methyl-2-oxobutanoate: step 1/2.</text>
</comment>
<comment type="subunit">
    <text evidence="1">Homodecamer; pentamer of dimers.</text>
</comment>
<comment type="subcellular location">
    <subcellularLocation>
        <location evidence="1">Cytoplasm</location>
    </subcellularLocation>
</comment>
<comment type="similarity">
    <text evidence="1">Belongs to the PanB family.</text>
</comment>
<reference key="1">
    <citation type="journal article" date="2008" name="Antimicrob. Agents Chemother.">
        <title>Mutated response regulator graR is responsible for phenotypic conversion of Staphylococcus aureus from heterogeneous vancomycin-intermediate resistance to vancomycin-intermediate resistance.</title>
        <authorList>
            <person name="Neoh H.-M."/>
            <person name="Cui L."/>
            <person name="Yuzawa H."/>
            <person name="Takeuchi F."/>
            <person name="Matsuo M."/>
            <person name="Hiramatsu K."/>
        </authorList>
    </citation>
    <scope>NUCLEOTIDE SEQUENCE [LARGE SCALE GENOMIC DNA]</scope>
    <source>
        <strain>Mu3 / ATCC 700698</strain>
    </source>
</reference>
<name>PANB_STAA1</name>
<proteinExistence type="inferred from homology"/>
<protein>
    <recommendedName>
        <fullName evidence="1">3-methyl-2-oxobutanoate hydroxymethyltransferase</fullName>
        <ecNumber evidence="1">2.1.2.11</ecNumber>
    </recommendedName>
    <alternativeName>
        <fullName evidence="1">Ketopantoate hydroxymethyltransferase</fullName>
        <shortName evidence="1">KPHMT</shortName>
    </alternativeName>
</protein>
<accession>A7X6X7</accession>
<feature type="chain" id="PRO_1000011381" description="3-methyl-2-oxobutanoate hydroxymethyltransferase">
    <location>
        <begin position="1"/>
        <end position="272"/>
    </location>
</feature>
<feature type="active site" description="Proton acceptor" evidence="1">
    <location>
        <position position="179"/>
    </location>
</feature>
<feature type="binding site" evidence="1">
    <location>
        <begin position="43"/>
        <end position="44"/>
    </location>
    <ligand>
        <name>3-methyl-2-oxobutanoate</name>
        <dbReference type="ChEBI" id="CHEBI:11851"/>
    </ligand>
</feature>
<feature type="binding site" evidence="1">
    <location>
        <position position="43"/>
    </location>
    <ligand>
        <name>Mg(2+)</name>
        <dbReference type="ChEBI" id="CHEBI:18420"/>
    </ligand>
</feature>
<feature type="binding site" evidence="1">
    <location>
        <position position="82"/>
    </location>
    <ligand>
        <name>3-methyl-2-oxobutanoate</name>
        <dbReference type="ChEBI" id="CHEBI:11851"/>
    </ligand>
</feature>
<feature type="binding site" evidence="1">
    <location>
        <position position="82"/>
    </location>
    <ligand>
        <name>Mg(2+)</name>
        <dbReference type="ChEBI" id="CHEBI:18420"/>
    </ligand>
</feature>
<feature type="binding site" evidence="1">
    <location>
        <position position="112"/>
    </location>
    <ligand>
        <name>3-methyl-2-oxobutanoate</name>
        <dbReference type="ChEBI" id="CHEBI:11851"/>
    </ligand>
</feature>
<feature type="binding site" evidence="1">
    <location>
        <position position="114"/>
    </location>
    <ligand>
        <name>Mg(2+)</name>
        <dbReference type="ChEBI" id="CHEBI:18420"/>
    </ligand>
</feature>
<dbReference type="EC" id="2.1.2.11" evidence="1"/>
<dbReference type="EMBL" id="AP009324">
    <property type="protein sequence ID" value="BAF79466.1"/>
    <property type="molecule type" value="Genomic_DNA"/>
</dbReference>
<dbReference type="RefSeq" id="WP_000860041.1">
    <property type="nucleotide sequence ID" value="NC_009782.1"/>
</dbReference>
<dbReference type="SMR" id="A7X6X7"/>
<dbReference type="KEGG" id="saw:SAHV_2583"/>
<dbReference type="HOGENOM" id="CLU_036645_1_0_9"/>
<dbReference type="UniPathway" id="UPA00028">
    <property type="reaction ID" value="UER00003"/>
</dbReference>
<dbReference type="GO" id="GO:0005737">
    <property type="term" value="C:cytoplasm"/>
    <property type="evidence" value="ECO:0007669"/>
    <property type="project" value="UniProtKB-SubCell"/>
</dbReference>
<dbReference type="GO" id="GO:0003864">
    <property type="term" value="F:3-methyl-2-oxobutanoate hydroxymethyltransferase activity"/>
    <property type="evidence" value="ECO:0007669"/>
    <property type="project" value="UniProtKB-UniRule"/>
</dbReference>
<dbReference type="GO" id="GO:0000287">
    <property type="term" value="F:magnesium ion binding"/>
    <property type="evidence" value="ECO:0007669"/>
    <property type="project" value="TreeGrafter"/>
</dbReference>
<dbReference type="GO" id="GO:0015940">
    <property type="term" value="P:pantothenate biosynthetic process"/>
    <property type="evidence" value="ECO:0007669"/>
    <property type="project" value="UniProtKB-UniRule"/>
</dbReference>
<dbReference type="CDD" id="cd06557">
    <property type="entry name" value="KPHMT-like"/>
    <property type="match status" value="1"/>
</dbReference>
<dbReference type="FunFam" id="3.20.20.60:FF:000003">
    <property type="entry name" value="3-methyl-2-oxobutanoate hydroxymethyltransferase"/>
    <property type="match status" value="1"/>
</dbReference>
<dbReference type="Gene3D" id="3.20.20.60">
    <property type="entry name" value="Phosphoenolpyruvate-binding domains"/>
    <property type="match status" value="1"/>
</dbReference>
<dbReference type="HAMAP" id="MF_00156">
    <property type="entry name" value="PanB"/>
    <property type="match status" value="1"/>
</dbReference>
<dbReference type="InterPro" id="IPR003700">
    <property type="entry name" value="Pantoate_hydroxy_MeTrfase"/>
</dbReference>
<dbReference type="InterPro" id="IPR015813">
    <property type="entry name" value="Pyrv/PenolPyrv_kinase-like_dom"/>
</dbReference>
<dbReference type="InterPro" id="IPR040442">
    <property type="entry name" value="Pyrv_kinase-like_dom_sf"/>
</dbReference>
<dbReference type="NCBIfam" id="TIGR00222">
    <property type="entry name" value="panB"/>
    <property type="match status" value="1"/>
</dbReference>
<dbReference type="NCBIfam" id="NF001452">
    <property type="entry name" value="PRK00311.1"/>
    <property type="match status" value="1"/>
</dbReference>
<dbReference type="PANTHER" id="PTHR20881">
    <property type="entry name" value="3-METHYL-2-OXOBUTANOATE HYDROXYMETHYLTRANSFERASE"/>
    <property type="match status" value="1"/>
</dbReference>
<dbReference type="PANTHER" id="PTHR20881:SF0">
    <property type="entry name" value="3-METHYL-2-OXOBUTANOATE HYDROXYMETHYLTRANSFERASE"/>
    <property type="match status" value="1"/>
</dbReference>
<dbReference type="Pfam" id="PF02548">
    <property type="entry name" value="Pantoate_transf"/>
    <property type="match status" value="1"/>
</dbReference>
<dbReference type="PIRSF" id="PIRSF000388">
    <property type="entry name" value="Pantoate_hydroxy_MeTrfase"/>
    <property type="match status" value="1"/>
</dbReference>
<dbReference type="SUPFAM" id="SSF51621">
    <property type="entry name" value="Phosphoenolpyruvate/pyruvate domain"/>
    <property type="match status" value="1"/>
</dbReference>
<gene>
    <name evidence="1" type="primary">panB</name>
    <name type="ordered locus">SAHV_2583</name>
</gene>
<sequence length="272" mass="29241">MKTVSLLIDMKQKQTKISMVTAYDFPSAKQVEAAGIDMILVGDSLGMTVLGYESTVQVTLADMIHHGRAVRRGAPNTFVVVDMPIGAVGISMTQDLNHALKLYQETNANAIKAEGAHITPFIEKATAIGIPVVAHLGLTPQSVGVMGYKLQGATKEAAEQLILDAKNVEQAGAVALVLEAIPNDLAEEISKHLTIPVIGIGAGKGTDGQVLVYHDMLNYGVEHKAKFVKQFADFSVGVDGLKQYDQEVKSGAFPSEEYTYKKKIMNEVNNND</sequence>
<evidence type="ECO:0000255" key="1">
    <source>
        <dbReference type="HAMAP-Rule" id="MF_00156"/>
    </source>
</evidence>
<organism>
    <name type="scientific">Staphylococcus aureus (strain Mu3 / ATCC 700698)</name>
    <dbReference type="NCBI Taxonomy" id="418127"/>
    <lineage>
        <taxon>Bacteria</taxon>
        <taxon>Bacillati</taxon>
        <taxon>Bacillota</taxon>
        <taxon>Bacilli</taxon>
        <taxon>Bacillales</taxon>
        <taxon>Staphylococcaceae</taxon>
        <taxon>Staphylococcus</taxon>
    </lineage>
</organism>